<feature type="chain" id="PRO_0000053653" description="Estrogen receptor beta-2">
    <location>
        <begin position="1"/>
        <end position="610"/>
    </location>
</feature>
<feature type="domain" description="NR LBD" evidence="3">
    <location>
        <begin position="302"/>
        <end position="538"/>
    </location>
</feature>
<feature type="DNA-binding region" description="Nuclear receptor" evidence="2">
    <location>
        <begin position="171"/>
        <end position="236"/>
    </location>
</feature>
<feature type="zinc finger region" description="NR C4-type" evidence="2">
    <location>
        <begin position="171"/>
        <end position="191"/>
    </location>
</feature>
<feature type="zinc finger region" description="NR C4-type" evidence="2">
    <location>
        <begin position="207"/>
        <end position="231"/>
    </location>
</feature>
<feature type="region of interest" description="Modulating">
    <location>
        <begin position="1"/>
        <end position="170"/>
    </location>
</feature>
<feature type="region of interest" description="Disordered" evidence="4">
    <location>
        <begin position="566"/>
        <end position="596"/>
    </location>
</feature>
<feature type="compositionally biased region" description="Basic and acidic residues" evidence="4">
    <location>
        <begin position="577"/>
        <end position="596"/>
    </location>
</feature>
<organism>
    <name type="scientific">Carassius auratus</name>
    <name type="common">Goldfish</name>
    <dbReference type="NCBI Taxonomy" id="7957"/>
    <lineage>
        <taxon>Eukaryota</taxon>
        <taxon>Metazoa</taxon>
        <taxon>Chordata</taxon>
        <taxon>Craniata</taxon>
        <taxon>Vertebrata</taxon>
        <taxon>Euteleostomi</taxon>
        <taxon>Actinopterygii</taxon>
        <taxon>Neopterygii</taxon>
        <taxon>Teleostei</taxon>
        <taxon>Ostariophysi</taxon>
        <taxon>Cypriniformes</taxon>
        <taxon>Cyprinidae</taxon>
        <taxon>Cyprininae</taxon>
        <taxon>Carassius</taxon>
    </lineage>
</organism>
<keyword id="KW-0238">DNA-binding</keyword>
<keyword id="KW-0446">Lipid-binding</keyword>
<keyword id="KW-0479">Metal-binding</keyword>
<keyword id="KW-0539">Nucleus</keyword>
<keyword id="KW-0675">Receptor</keyword>
<keyword id="KW-1185">Reference proteome</keyword>
<keyword id="KW-0754">Steroid-binding</keyword>
<keyword id="KW-0804">Transcription</keyword>
<keyword id="KW-0805">Transcription regulation</keyword>
<keyword id="KW-0862">Zinc</keyword>
<keyword id="KW-0863">Zinc-finger</keyword>
<protein>
    <recommendedName>
        <fullName>Estrogen receptor beta-2</fullName>
        <shortName>ER-beta-2</shortName>
    </recommendedName>
    <alternativeName>
        <fullName>Nuclear receptor subfamily 3 group A member 2-B</fullName>
    </alternativeName>
</protein>
<gene>
    <name type="primary">esr2b</name>
    <name type="synonym">nr3a2b</name>
</gene>
<proteinExistence type="evidence at transcript level"/>
<comment type="function">
    <text>Binds estrogens with an affinity similar to that of ER-alpha, and activates expression of reporter genes containing estrogen response elements (ERE) in an estrogen-dependent manner.</text>
</comment>
<comment type="subunit">
    <text evidence="1">Binds DNA as a homodimer. Can form a heterodimer with ER-alpha (By similarity).</text>
</comment>
<comment type="subcellular location">
    <subcellularLocation>
        <location>Nucleus</location>
    </subcellularLocation>
</comment>
<comment type="tissue specificity">
    <text>Predominantly expressed in pituitary, telencephalon and hypothalamus as well as in the liver.</text>
</comment>
<comment type="domain">
    <text>Composed of three domains: a modulating N-terminal domain, a DNA-binding domain and a C-terminal ligand-binding domain.</text>
</comment>
<comment type="similarity">
    <text evidence="5">Belongs to the nuclear hormone receptor family. NR3 subfamily.</text>
</comment>
<reference key="1">
    <citation type="journal article" date="2000" name="Biochim. Biophys. Acta">
        <title>cDNA cloning and expression of a novel estrogen receptor beta-subtype in goldfish (Carassius auratus).</title>
        <authorList>
            <person name="Ma C.H."/>
            <person name="Dong K.W."/>
            <person name="Yu K.L."/>
        </authorList>
    </citation>
    <scope>NUCLEOTIDE SEQUENCE [MRNA]</scope>
    <source>
        <tissue>Brain</tissue>
        <tissue>Pituitary</tissue>
    </source>
</reference>
<evidence type="ECO:0000250" key="1"/>
<evidence type="ECO:0000255" key="2">
    <source>
        <dbReference type="PROSITE-ProRule" id="PRU00407"/>
    </source>
</evidence>
<evidence type="ECO:0000255" key="3">
    <source>
        <dbReference type="PROSITE-ProRule" id="PRU01189"/>
    </source>
</evidence>
<evidence type="ECO:0000256" key="4">
    <source>
        <dbReference type="SAM" id="MobiDB-lite"/>
    </source>
</evidence>
<evidence type="ECO:0000305" key="5"/>
<sequence length="610" mass="67852">MSSSTGPAPASASPVQANRGNSPNILPLLYTSQLGMDSQTICIPSPYVEACQDYSPPHGGEISHGALTLYSPVSSPVLGYTHPPVSESLVPLNSAIFWPPHPTHSTPSLHCPSPLAYRETHAHTTWEDAKTHINQSSSVLTHAKLLGQQLDGDDGLNPSPGILGKGDTHFCAVCHDYASGYHYGVWSCEGCKAFFKRSIQGHNDYICPATNQCTIDKSRRKSCQACRLRKCYEVGMMKCGVRRERCSYRGGRHRRNPPIRDSSGGAIGVRGHSQPHLEFPLSPTHPLFPLGDRAEGCGQNLSPEQLVNCILEAEPPQIYLREPIKKPYTEASMMMSLTNLADKELVLMISWAKKIPGFVELTLSDQVHLLECCWLDILMLGLMWRSVDHPGKLIFSPDLKLNRDEGTCVEGIMEIFDMLLATTSRFRELKLQREEYVCLKAMILLNSSNCSRLPQTPEDVESRGKVLRLLDSVTDALVWTISRTGLSSHQQSIRLAHLLMLLSHIRHLSNKGIEHLSTMKRKNVVLLYDLLLEMLDANTSQSSRMLAAHTKASLRMDTQQTTEILHTSKQQPALKESNQDTRHSPQAEGTVDKTLHRVDKTLHRVDVDTD</sequence>
<accession>Q9IAL9</accession>
<name>ESR22_CARAU</name>
<dbReference type="EMBL" id="AF177465">
    <property type="protein sequence ID" value="AAF35170.1"/>
    <property type="molecule type" value="mRNA"/>
</dbReference>
<dbReference type="SMR" id="Q9IAL9"/>
<dbReference type="Proteomes" id="UP000515129">
    <property type="component" value="Unplaced"/>
</dbReference>
<dbReference type="GO" id="GO:0005634">
    <property type="term" value="C:nucleus"/>
    <property type="evidence" value="ECO:0007669"/>
    <property type="project" value="UniProtKB-SubCell"/>
</dbReference>
<dbReference type="GO" id="GO:0042562">
    <property type="term" value="F:hormone binding"/>
    <property type="evidence" value="ECO:0007669"/>
    <property type="project" value="UniProtKB-ARBA"/>
</dbReference>
<dbReference type="GO" id="GO:0030284">
    <property type="term" value="F:nuclear estrogen receptor activity"/>
    <property type="evidence" value="ECO:0007669"/>
    <property type="project" value="InterPro"/>
</dbReference>
<dbReference type="GO" id="GO:0043565">
    <property type="term" value="F:sequence-specific DNA binding"/>
    <property type="evidence" value="ECO:0007669"/>
    <property type="project" value="InterPro"/>
</dbReference>
<dbReference type="GO" id="GO:0005496">
    <property type="term" value="F:steroid binding"/>
    <property type="evidence" value="ECO:0000250"/>
    <property type="project" value="UniProtKB"/>
</dbReference>
<dbReference type="GO" id="GO:0008270">
    <property type="term" value="F:zinc ion binding"/>
    <property type="evidence" value="ECO:0007669"/>
    <property type="project" value="UniProtKB-KW"/>
</dbReference>
<dbReference type="GO" id="GO:0071392">
    <property type="term" value="P:cellular response to estradiol stimulus"/>
    <property type="evidence" value="ECO:0007669"/>
    <property type="project" value="InterPro"/>
</dbReference>
<dbReference type="GO" id="GO:0030520">
    <property type="term" value="P:estrogen receptor signaling pathway"/>
    <property type="evidence" value="ECO:0007669"/>
    <property type="project" value="InterPro"/>
</dbReference>
<dbReference type="CDD" id="cd07171">
    <property type="entry name" value="NR_DBD_ER"/>
    <property type="match status" value="1"/>
</dbReference>
<dbReference type="CDD" id="cd06949">
    <property type="entry name" value="NR_LBD_ER"/>
    <property type="match status" value="1"/>
</dbReference>
<dbReference type="FunFam" id="1.10.565.10:FF:000010">
    <property type="entry name" value="Estrogen receptor"/>
    <property type="match status" value="1"/>
</dbReference>
<dbReference type="FunFam" id="3.30.50.10:FF:000014">
    <property type="entry name" value="Estrogen receptor beta"/>
    <property type="match status" value="1"/>
</dbReference>
<dbReference type="Gene3D" id="3.30.50.10">
    <property type="entry name" value="Erythroid Transcription Factor GATA-1, subunit A"/>
    <property type="match status" value="1"/>
</dbReference>
<dbReference type="Gene3D" id="1.10.565.10">
    <property type="entry name" value="Retinoid X Receptor"/>
    <property type="match status" value="1"/>
</dbReference>
<dbReference type="InterPro" id="IPR021064">
    <property type="entry name" value="ER-beta-like_N"/>
</dbReference>
<dbReference type="InterPro" id="IPR028355">
    <property type="entry name" value="ER-beta/gamma"/>
</dbReference>
<dbReference type="InterPro" id="IPR024178">
    <property type="entry name" value="Est_rcpt/est-rel_rcp"/>
</dbReference>
<dbReference type="InterPro" id="IPR035500">
    <property type="entry name" value="NHR-like_dom_sf"/>
</dbReference>
<dbReference type="InterPro" id="IPR000536">
    <property type="entry name" value="Nucl_hrmn_rcpt_lig-bd"/>
</dbReference>
<dbReference type="InterPro" id="IPR050200">
    <property type="entry name" value="Nuclear_hormone_rcpt_NR3"/>
</dbReference>
<dbReference type="InterPro" id="IPR001723">
    <property type="entry name" value="Nuclear_hrmn_rcpt"/>
</dbReference>
<dbReference type="InterPro" id="IPR001628">
    <property type="entry name" value="Znf_hrmn_rcpt"/>
</dbReference>
<dbReference type="InterPro" id="IPR013088">
    <property type="entry name" value="Znf_NHR/GATA"/>
</dbReference>
<dbReference type="PANTHER" id="PTHR48092">
    <property type="entry name" value="KNIRPS-RELATED PROTEIN-RELATED"/>
    <property type="match status" value="1"/>
</dbReference>
<dbReference type="Pfam" id="PF12497">
    <property type="entry name" value="ERbeta_N"/>
    <property type="match status" value="1"/>
</dbReference>
<dbReference type="Pfam" id="PF00104">
    <property type="entry name" value="Hormone_recep"/>
    <property type="match status" value="1"/>
</dbReference>
<dbReference type="Pfam" id="PF00105">
    <property type="entry name" value="zf-C4"/>
    <property type="match status" value="1"/>
</dbReference>
<dbReference type="PIRSF" id="PIRSF500102">
    <property type="entry name" value="ER-b"/>
    <property type="match status" value="1"/>
</dbReference>
<dbReference type="PIRSF" id="PIRSF002527">
    <property type="entry name" value="ER-like_NR"/>
    <property type="match status" value="1"/>
</dbReference>
<dbReference type="PRINTS" id="PR00398">
    <property type="entry name" value="STRDHORMONER"/>
</dbReference>
<dbReference type="PRINTS" id="PR00047">
    <property type="entry name" value="STROIDFINGER"/>
</dbReference>
<dbReference type="SMART" id="SM00430">
    <property type="entry name" value="HOLI"/>
    <property type="match status" value="1"/>
</dbReference>
<dbReference type="SMART" id="SM00399">
    <property type="entry name" value="ZnF_C4"/>
    <property type="match status" value="1"/>
</dbReference>
<dbReference type="SUPFAM" id="SSF57716">
    <property type="entry name" value="Glucocorticoid receptor-like (DNA-binding domain)"/>
    <property type="match status" value="1"/>
</dbReference>
<dbReference type="SUPFAM" id="SSF48508">
    <property type="entry name" value="Nuclear receptor ligand-binding domain"/>
    <property type="match status" value="1"/>
</dbReference>
<dbReference type="PROSITE" id="PS51843">
    <property type="entry name" value="NR_LBD"/>
    <property type="match status" value="1"/>
</dbReference>
<dbReference type="PROSITE" id="PS00031">
    <property type="entry name" value="NUCLEAR_REC_DBD_1"/>
    <property type="match status" value="1"/>
</dbReference>
<dbReference type="PROSITE" id="PS51030">
    <property type="entry name" value="NUCLEAR_REC_DBD_2"/>
    <property type="match status" value="1"/>
</dbReference>